<dbReference type="EMBL" id="CU329671">
    <property type="protein sequence ID" value="CAA18659.1"/>
    <property type="molecule type" value="Genomic_DNA"/>
</dbReference>
<dbReference type="PIR" id="T39407">
    <property type="entry name" value="T39407"/>
</dbReference>
<dbReference type="RefSeq" id="NP_596555.1">
    <property type="nucleotide sequence ID" value="NM_001022476.2"/>
</dbReference>
<dbReference type="SMR" id="O60068"/>
<dbReference type="FunCoup" id="O60068">
    <property type="interactions" value="171"/>
</dbReference>
<dbReference type="STRING" id="284812.O60068"/>
<dbReference type="iPTMnet" id="O60068"/>
<dbReference type="PaxDb" id="4896-SPBC13G1.06c.1"/>
<dbReference type="EnsemblFungi" id="SPBC13G1.06c.1">
    <property type="protein sequence ID" value="SPBC13G1.06c.1:pep"/>
    <property type="gene ID" value="SPBC13G1.06c"/>
</dbReference>
<dbReference type="GeneID" id="2539888"/>
<dbReference type="KEGG" id="spo:2539888"/>
<dbReference type="PomBase" id="SPBC13G1.06c">
    <property type="gene designation" value="isd11"/>
</dbReference>
<dbReference type="VEuPathDB" id="FungiDB:SPBC13G1.06c"/>
<dbReference type="eggNOG" id="KOG3801">
    <property type="taxonomic scope" value="Eukaryota"/>
</dbReference>
<dbReference type="HOGENOM" id="CLU_120076_3_0_1"/>
<dbReference type="InParanoid" id="O60068"/>
<dbReference type="OMA" id="DAFCENR"/>
<dbReference type="Reactome" id="R-SPO-1362409">
    <property type="pathway name" value="Mitochondrial iron-sulfur cluster biogenesis"/>
</dbReference>
<dbReference type="Reactome" id="R-SPO-9865881">
    <property type="pathway name" value="Complex III assembly"/>
</dbReference>
<dbReference type="PRO" id="PR:O60068"/>
<dbReference type="Proteomes" id="UP000002485">
    <property type="component" value="Chromosome II"/>
</dbReference>
<dbReference type="GO" id="GO:0005829">
    <property type="term" value="C:cytosol"/>
    <property type="evidence" value="ECO:0007005"/>
    <property type="project" value="PomBase"/>
</dbReference>
<dbReference type="GO" id="GO:1990221">
    <property type="term" value="C:L-cysteine desulfurase complex"/>
    <property type="evidence" value="ECO:0000318"/>
    <property type="project" value="GO_Central"/>
</dbReference>
<dbReference type="GO" id="GO:0099128">
    <property type="term" value="C:mitochondrial [2Fe-2S] assembly complex"/>
    <property type="evidence" value="ECO:0000304"/>
    <property type="project" value="PomBase"/>
</dbReference>
<dbReference type="GO" id="GO:0005759">
    <property type="term" value="C:mitochondrial matrix"/>
    <property type="evidence" value="ECO:0000266"/>
    <property type="project" value="PomBase"/>
</dbReference>
<dbReference type="GO" id="GO:0005739">
    <property type="term" value="C:mitochondrion"/>
    <property type="evidence" value="ECO:0000318"/>
    <property type="project" value="GO_Central"/>
</dbReference>
<dbReference type="GO" id="GO:0005634">
    <property type="term" value="C:nucleus"/>
    <property type="evidence" value="ECO:0007005"/>
    <property type="project" value="PomBase"/>
</dbReference>
<dbReference type="GO" id="GO:0044571">
    <property type="term" value="P:[2Fe-2S] cluster assembly"/>
    <property type="evidence" value="ECO:0000305"/>
    <property type="project" value="PomBase"/>
</dbReference>
<dbReference type="GO" id="GO:0016226">
    <property type="term" value="P:iron-sulfur cluster assembly"/>
    <property type="evidence" value="ECO:0000318"/>
    <property type="project" value="GO_Central"/>
</dbReference>
<dbReference type="CDD" id="cd20264">
    <property type="entry name" value="Complex1_LYR_LYRM4"/>
    <property type="match status" value="1"/>
</dbReference>
<dbReference type="InterPro" id="IPR008011">
    <property type="entry name" value="Complex1_LYR_dom"/>
</dbReference>
<dbReference type="InterPro" id="IPR045297">
    <property type="entry name" value="Complex1_LYR_LYRM4"/>
</dbReference>
<dbReference type="InterPro" id="IPR051522">
    <property type="entry name" value="ISC_assembly_LYR"/>
</dbReference>
<dbReference type="PANTHER" id="PTHR13166:SF7">
    <property type="entry name" value="LYR MOTIF-CONTAINING PROTEIN 4"/>
    <property type="match status" value="1"/>
</dbReference>
<dbReference type="PANTHER" id="PTHR13166">
    <property type="entry name" value="PROTEIN C6ORF149"/>
    <property type="match status" value="1"/>
</dbReference>
<dbReference type="Pfam" id="PF05347">
    <property type="entry name" value="Complex1_LYR"/>
    <property type="match status" value="1"/>
</dbReference>
<name>ISD11_SCHPO</name>
<evidence type="ECO:0000250" key="1"/>
<evidence type="ECO:0000305" key="2"/>
<comment type="function">
    <text evidence="1">Required for mitochondrial iron-sulfur (Fe-S) protein biosynthesis.</text>
</comment>
<comment type="subcellular location">
    <subcellularLocation>
        <location evidence="1">Mitochondrion</location>
    </subcellularLocation>
</comment>
<comment type="similarity">
    <text evidence="2">Belongs to the complex I LYR family.</text>
</comment>
<keyword id="KW-0496">Mitochondrion</keyword>
<keyword id="KW-1185">Reference proteome</keyword>
<reference key="1">
    <citation type="journal article" date="2002" name="Nature">
        <title>The genome sequence of Schizosaccharomyces pombe.</title>
        <authorList>
            <person name="Wood V."/>
            <person name="Gwilliam R."/>
            <person name="Rajandream M.A."/>
            <person name="Lyne M.H."/>
            <person name="Lyne R."/>
            <person name="Stewart A."/>
            <person name="Sgouros J.G."/>
            <person name="Peat N."/>
            <person name="Hayles J."/>
            <person name="Baker S.G."/>
            <person name="Basham D."/>
            <person name="Bowman S."/>
            <person name="Brooks K."/>
            <person name="Brown D."/>
            <person name="Brown S."/>
            <person name="Chillingworth T."/>
            <person name="Churcher C.M."/>
            <person name="Collins M."/>
            <person name="Connor R."/>
            <person name="Cronin A."/>
            <person name="Davis P."/>
            <person name="Feltwell T."/>
            <person name="Fraser A."/>
            <person name="Gentles S."/>
            <person name="Goble A."/>
            <person name="Hamlin N."/>
            <person name="Harris D.E."/>
            <person name="Hidalgo J."/>
            <person name="Hodgson G."/>
            <person name="Holroyd S."/>
            <person name="Hornsby T."/>
            <person name="Howarth S."/>
            <person name="Huckle E.J."/>
            <person name="Hunt S."/>
            <person name="Jagels K."/>
            <person name="James K.D."/>
            <person name="Jones L."/>
            <person name="Jones M."/>
            <person name="Leather S."/>
            <person name="McDonald S."/>
            <person name="McLean J."/>
            <person name="Mooney P."/>
            <person name="Moule S."/>
            <person name="Mungall K.L."/>
            <person name="Murphy L.D."/>
            <person name="Niblett D."/>
            <person name="Odell C."/>
            <person name="Oliver K."/>
            <person name="O'Neil S."/>
            <person name="Pearson D."/>
            <person name="Quail M.A."/>
            <person name="Rabbinowitsch E."/>
            <person name="Rutherford K.M."/>
            <person name="Rutter S."/>
            <person name="Saunders D."/>
            <person name="Seeger K."/>
            <person name="Sharp S."/>
            <person name="Skelton J."/>
            <person name="Simmonds M.N."/>
            <person name="Squares R."/>
            <person name="Squares S."/>
            <person name="Stevens K."/>
            <person name="Taylor K."/>
            <person name="Taylor R.G."/>
            <person name="Tivey A."/>
            <person name="Walsh S.V."/>
            <person name="Warren T."/>
            <person name="Whitehead S."/>
            <person name="Woodward J.R."/>
            <person name="Volckaert G."/>
            <person name="Aert R."/>
            <person name="Robben J."/>
            <person name="Grymonprez B."/>
            <person name="Weltjens I."/>
            <person name="Vanstreels E."/>
            <person name="Rieger M."/>
            <person name="Schaefer M."/>
            <person name="Mueller-Auer S."/>
            <person name="Gabel C."/>
            <person name="Fuchs M."/>
            <person name="Duesterhoeft A."/>
            <person name="Fritzc C."/>
            <person name="Holzer E."/>
            <person name="Moestl D."/>
            <person name="Hilbert H."/>
            <person name="Borzym K."/>
            <person name="Langer I."/>
            <person name="Beck A."/>
            <person name="Lehrach H."/>
            <person name="Reinhardt R."/>
            <person name="Pohl T.M."/>
            <person name="Eger P."/>
            <person name="Zimmermann W."/>
            <person name="Wedler H."/>
            <person name="Wambutt R."/>
            <person name="Purnelle B."/>
            <person name="Goffeau A."/>
            <person name="Cadieu E."/>
            <person name="Dreano S."/>
            <person name="Gloux S."/>
            <person name="Lelaure V."/>
            <person name="Mottier S."/>
            <person name="Galibert F."/>
            <person name="Aves S.J."/>
            <person name="Xiang Z."/>
            <person name="Hunt C."/>
            <person name="Moore K."/>
            <person name="Hurst S.M."/>
            <person name="Lucas M."/>
            <person name="Rochet M."/>
            <person name="Gaillardin C."/>
            <person name="Tallada V.A."/>
            <person name="Garzon A."/>
            <person name="Thode G."/>
            <person name="Daga R.R."/>
            <person name="Cruzado L."/>
            <person name="Jimenez J."/>
            <person name="Sanchez M."/>
            <person name="del Rey F."/>
            <person name="Benito J."/>
            <person name="Dominguez A."/>
            <person name="Revuelta J.L."/>
            <person name="Moreno S."/>
            <person name="Armstrong J."/>
            <person name="Forsburg S.L."/>
            <person name="Cerutti L."/>
            <person name="Lowe T."/>
            <person name="McCombie W.R."/>
            <person name="Paulsen I."/>
            <person name="Potashkin J."/>
            <person name="Shpakovski G.V."/>
            <person name="Ussery D."/>
            <person name="Barrell B.G."/>
            <person name="Nurse P."/>
        </authorList>
    </citation>
    <scope>NUCLEOTIDE SEQUENCE [LARGE SCALE GENOMIC DNA]</scope>
    <source>
        <strain>972 / ATCC 24843</strain>
    </source>
</reference>
<reference key="2">
    <citation type="journal article" date="2006" name="Nat. Biotechnol.">
        <title>ORFeome cloning and global analysis of protein localization in the fission yeast Schizosaccharomyces pombe.</title>
        <authorList>
            <person name="Matsuyama A."/>
            <person name="Arai R."/>
            <person name="Yashiroda Y."/>
            <person name="Shirai A."/>
            <person name="Kamata A."/>
            <person name="Sekido S."/>
            <person name="Kobayashi Y."/>
            <person name="Hashimoto A."/>
            <person name="Hamamoto M."/>
            <person name="Hiraoka Y."/>
            <person name="Horinouchi S."/>
            <person name="Yoshida M."/>
        </authorList>
    </citation>
    <scope>SUBCELLULAR LOCATION [LARGE SCALE ANALYSIS]</scope>
</reference>
<feature type="chain" id="PRO_0000339460" description="Protein isd11">
    <location>
        <begin position="1"/>
        <end position="102"/>
    </location>
</feature>
<sequence>MSVSKQHVVRLYRNILKTSKLFPYTYREYTIRRTRDKFKELKVESDPAKFEQGIKDSEKLLEIIQRQSIINGMYNKRNLVVEGIDDTAEGEVKKSFENASQS</sequence>
<organism>
    <name type="scientific">Schizosaccharomyces pombe (strain 972 / ATCC 24843)</name>
    <name type="common">Fission yeast</name>
    <dbReference type="NCBI Taxonomy" id="284812"/>
    <lineage>
        <taxon>Eukaryota</taxon>
        <taxon>Fungi</taxon>
        <taxon>Dikarya</taxon>
        <taxon>Ascomycota</taxon>
        <taxon>Taphrinomycotina</taxon>
        <taxon>Schizosaccharomycetes</taxon>
        <taxon>Schizosaccharomycetales</taxon>
        <taxon>Schizosaccharomycetaceae</taxon>
        <taxon>Schizosaccharomyces</taxon>
    </lineage>
</organism>
<proteinExistence type="inferred from homology"/>
<protein>
    <recommendedName>
        <fullName>Protein isd11</fullName>
    </recommendedName>
</protein>
<accession>O60068</accession>
<gene>
    <name type="primary">isd11</name>
    <name type="ORF">SPBC13G1.06c</name>
</gene>